<gene>
    <name evidence="1" type="primary">torD</name>
    <name type="ordered locus">SPC_3907</name>
</gene>
<organism>
    <name type="scientific">Salmonella paratyphi C (strain RKS4594)</name>
    <dbReference type="NCBI Taxonomy" id="476213"/>
    <lineage>
        <taxon>Bacteria</taxon>
        <taxon>Pseudomonadati</taxon>
        <taxon>Pseudomonadota</taxon>
        <taxon>Gammaproteobacteria</taxon>
        <taxon>Enterobacterales</taxon>
        <taxon>Enterobacteriaceae</taxon>
        <taxon>Salmonella</taxon>
    </lineage>
</organism>
<sequence>MIKQPALAQEQYACVYAWLALLFFREVDDEGLIQLQSAEIADWLALLKRQPALAASVALLEQKIAALSLRQDAQLELAADFCGLFLMTDKKSALPYASQYPQQEPGMIKHLLLEAGMEVNDDFKEPADHLAIYLELLSHLHFSLGESFQQRRMNKLRQKTLSSLLEWLPEFTNNCLKHDPYGFYAALSQLLLAIVRFDDGKEDLSIVAAE</sequence>
<keyword id="KW-0143">Chaperone</keyword>
<keyword id="KW-0963">Cytoplasm</keyword>
<name>TORD_SALPC</name>
<accession>C0Q263</accession>
<dbReference type="EMBL" id="CP000857">
    <property type="protein sequence ID" value="ACN47979.1"/>
    <property type="molecule type" value="Genomic_DNA"/>
</dbReference>
<dbReference type="RefSeq" id="WP_000595415.1">
    <property type="nucleotide sequence ID" value="NC_012125.1"/>
</dbReference>
<dbReference type="SMR" id="C0Q263"/>
<dbReference type="KEGG" id="sei:SPC_3907"/>
<dbReference type="HOGENOM" id="CLU_077650_4_0_6"/>
<dbReference type="Proteomes" id="UP000001599">
    <property type="component" value="Chromosome"/>
</dbReference>
<dbReference type="GO" id="GO:0005737">
    <property type="term" value="C:cytoplasm"/>
    <property type="evidence" value="ECO:0007669"/>
    <property type="project" value="UniProtKB-SubCell"/>
</dbReference>
<dbReference type="GO" id="GO:0051259">
    <property type="term" value="P:protein complex oligomerization"/>
    <property type="evidence" value="ECO:0007669"/>
    <property type="project" value="InterPro"/>
</dbReference>
<dbReference type="GO" id="GO:0006457">
    <property type="term" value="P:protein folding"/>
    <property type="evidence" value="ECO:0007669"/>
    <property type="project" value="UniProtKB-UniRule"/>
</dbReference>
<dbReference type="Gene3D" id="1.20.120.1820">
    <property type="match status" value="1"/>
</dbReference>
<dbReference type="Gene3D" id="1.20.1280.20">
    <property type="entry name" value="HscB, C-terminal domain"/>
    <property type="match status" value="1"/>
</dbReference>
<dbReference type="HAMAP" id="MF_01150">
    <property type="entry name" value="TorD"/>
    <property type="match status" value="1"/>
</dbReference>
<dbReference type="InterPro" id="IPR023069">
    <property type="entry name" value="Chaperone_TorD"/>
</dbReference>
<dbReference type="InterPro" id="IPR020945">
    <property type="entry name" value="DMSO/NO3_reduct_chaperone"/>
</dbReference>
<dbReference type="InterPro" id="IPR036386">
    <property type="entry name" value="HscB_C_sf"/>
</dbReference>
<dbReference type="InterPro" id="IPR036411">
    <property type="entry name" value="TorD-like_sf"/>
</dbReference>
<dbReference type="InterPro" id="IPR050289">
    <property type="entry name" value="TorD/DmsD_chaperones"/>
</dbReference>
<dbReference type="NCBIfam" id="NF003442">
    <property type="entry name" value="PRK04976.1"/>
    <property type="match status" value="1"/>
</dbReference>
<dbReference type="PANTHER" id="PTHR34227:SF11">
    <property type="entry name" value="CHAPERONE PROTEIN TORD"/>
    <property type="match status" value="1"/>
</dbReference>
<dbReference type="PANTHER" id="PTHR34227">
    <property type="entry name" value="CHAPERONE PROTEIN YCDY"/>
    <property type="match status" value="1"/>
</dbReference>
<dbReference type="Pfam" id="PF02613">
    <property type="entry name" value="Nitrate_red_del"/>
    <property type="match status" value="1"/>
</dbReference>
<dbReference type="SUPFAM" id="SSF89155">
    <property type="entry name" value="TorD-like"/>
    <property type="match status" value="1"/>
</dbReference>
<comment type="function">
    <text evidence="1">Involved in the biogenesis of TorA. Acts on TorA before the insertion of the molybdenum cofactor and, as a result, probably favors a conformation of the apoenzyme that is competent for acquiring the cofactor.</text>
</comment>
<comment type="subcellular location">
    <subcellularLocation>
        <location evidence="1">Cytoplasm</location>
    </subcellularLocation>
</comment>
<comment type="similarity">
    <text evidence="1">Belongs to the TorD/DmsD family. TorD subfamily.</text>
</comment>
<proteinExistence type="inferred from homology"/>
<evidence type="ECO:0000255" key="1">
    <source>
        <dbReference type="HAMAP-Rule" id="MF_01150"/>
    </source>
</evidence>
<reference key="1">
    <citation type="journal article" date="2009" name="PLoS ONE">
        <title>Salmonella paratyphi C: genetic divergence from Salmonella choleraesuis and pathogenic convergence with Salmonella typhi.</title>
        <authorList>
            <person name="Liu W.-Q."/>
            <person name="Feng Y."/>
            <person name="Wang Y."/>
            <person name="Zou Q.-H."/>
            <person name="Chen F."/>
            <person name="Guo J.-T."/>
            <person name="Peng Y.-H."/>
            <person name="Jin Y."/>
            <person name="Li Y.-G."/>
            <person name="Hu S.-N."/>
            <person name="Johnston R.N."/>
            <person name="Liu G.-R."/>
            <person name="Liu S.-L."/>
        </authorList>
    </citation>
    <scope>NUCLEOTIDE SEQUENCE [LARGE SCALE GENOMIC DNA]</scope>
    <source>
        <strain>RKS4594</strain>
    </source>
</reference>
<protein>
    <recommendedName>
        <fullName evidence="1">Chaperone protein TorD</fullName>
    </recommendedName>
</protein>
<feature type="chain" id="PRO_1000164170" description="Chaperone protein TorD">
    <location>
        <begin position="1"/>
        <end position="210"/>
    </location>
</feature>